<evidence type="ECO:0000255" key="1">
    <source>
        <dbReference type="HAMAP-Rule" id="MF_00337"/>
    </source>
</evidence>
<keyword id="KW-0963">Cytoplasm</keyword>
<keyword id="KW-0269">Exonuclease</keyword>
<keyword id="KW-0378">Hydrolase</keyword>
<keyword id="KW-0540">Nuclease</keyword>
<keyword id="KW-1185">Reference proteome</keyword>
<protein>
    <recommendedName>
        <fullName evidence="1">Exodeoxyribonuclease 7 small subunit</fullName>
        <ecNumber evidence="1">3.1.11.6</ecNumber>
    </recommendedName>
    <alternativeName>
        <fullName evidence="1">Exodeoxyribonuclease VII small subunit</fullName>
        <shortName evidence="1">Exonuclease VII small subunit</shortName>
    </alternativeName>
</protein>
<comment type="function">
    <text evidence="1">Bidirectionally degrades single-stranded DNA into large acid-insoluble oligonucleotides, which are then degraded further into small acid-soluble oligonucleotides.</text>
</comment>
<comment type="catalytic activity">
    <reaction evidence="1">
        <text>Exonucleolytic cleavage in either 5'- to 3'- or 3'- to 5'-direction to yield nucleoside 5'-phosphates.</text>
        <dbReference type="EC" id="3.1.11.6"/>
    </reaction>
</comment>
<comment type="subunit">
    <text evidence="1">Heterooligomer composed of large and small subunits.</text>
</comment>
<comment type="subcellular location">
    <subcellularLocation>
        <location evidence="1">Cytoplasm</location>
    </subcellularLocation>
</comment>
<comment type="similarity">
    <text evidence="1">Belongs to the XseB family.</text>
</comment>
<sequence length="74" mass="8421">MAKAKPAWSYETAIAEVEQIVQQLESGELPLAEVVEQFQQASQRLQQCDRFLRDKQAELDLLIESLDEPPVPPQ</sequence>
<gene>
    <name evidence="1" type="primary">xseB</name>
    <name type="ordered locus">Synpcc7942_0472</name>
</gene>
<name>EX7S_SYNE7</name>
<reference key="1">
    <citation type="submission" date="2005-08" db="EMBL/GenBank/DDBJ databases">
        <title>Complete sequence of chromosome 1 of Synechococcus elongatus PCC 7942.</title>
        <authorList>
            <consortium name="US DOE Joint Genome Institute"/>
            <person name="Copeland A."/>
            <person name="Lucas S."/>
            <person name="Lapidus A."/>
            <person name="Barry K."/>
            <person name="Detter J.C."/>
            <person name="Glavina T."/>
            <person name="Hammon N."/>
            <person name="Israni S."/>
            <person name="Pitluck S."/>
            <person name="Schmutz J."/>
            <person name="Larimer F."/>
            <person name="Land M."/>
            <person name="Kyrpides N."/>
            <person name="Lykidis A."/>
            <person name="Golden S."/>
            <person name="Richardson P."/>
        </authorList>
    </citation>
    <scope>NUCLEOTIDE SEQUENCE [LARGE SCALE GENOMIC DNA]</scope>
    <source>
        <strain>ATCC 33912 / PCC 7942 / FACHB-805</strain>
    </source>
</reference>
<feature type="chain" id="PRO_0000303766" description="Exodeoxyribonuclease 7 small subunit">
    <location>
        <begin position="1"/>
        <end position="74"/>
    </location>
</feature>
<accession>Q31R15</accession>
<dbReference type="EC" id="3.1.11.6" evidence="1"/>
<dbReference type="EMBL" id="CP000100">
    <property type="protein sequence ID" value="ABB56504.1"/>
    <property type="molecule type" value="Genomic_DNA"/>
</dbReference>
<dbReference type="RefSeq" id="WP_011243358.1">
    <property type="nucleotide sequence ID" value="NZ_JACJTX010000002.1"/>
</dbReference>
<dbReference type="SMR" id="Q31R15"/>
<dbReference type="STRING" id="1140.Synpcc7942_0472"/>
<dbReference type="PaxDb" id="1140-Synpcc7942_0472"/>
<dbReference type="GeneID" id="72429295"/>
<dbReference type="KEGG" id="syf:Synpcc7942_0472"/>
<dbReference type="eggNOG" id="COG1722">
    <property type="taxonomic scope" value="Bacteria"/>
</dbReference>
<dbReference type="HOGENOM" id="CLU_145918_1_0_3"/>
<dbReference type="OrthoDB" id="427334at2"/>
<dbReference type="BioCyc" id="SYNEL:SYNPCC7942_0472-MONOMER"/>
<dbReference type="Proteomes" id="UP000889800">
    <property type="component" value="Chromosome"/>
</dbReference>
<dbReference type="GO" id="GO:0005829">
    <property type="term" value="C:cytosol"/>
    <property type="evidence" value="ECO:0007669"/>
    <property type="project" value="TreeGrafter"/>
</dbReference>
<dbReference type="GO" id="GO:0009318">
    <property type="term" value="C:exodeoxyribonuclease VII complex"/>
    <property type="evidence" value="ECO:0007669"/>
    <property type="project" value="InterPro"/>
</dbReference>
<dbReference type="GO" id="GO:0008855">
    <property type="term" value="F:exodeoxyribonuclease VII activity"/>
    <property type="evidence" value="ECO:0007669"/>
    <property type="project" value="UniProtKB-UniRule"/>
</dbReference>
<dbReference type="GO" id="GO:0006308">
    <property type="term" value="P:DNA catabolic process"/>
    <property type="evidence" value="ECO:0007669"/>
    <property type="project" value="UniProtKB-UniRule"/>
</dbReference>
<dbReference type="Gene3D" id="1.10.287.1040">
    <property type="entry name" value="Exonuclease VII, small subunit"/>
    <property type="match status" value="1"/>
</dbReference>
<dbReference type="HAMAP" id="MF_00337">
    <property type="entry name" value="Exonuc_7_S"/>
    <property type="match status" value="1"/>
</dbReference>
<dbReference type="InterPro" id="IPR003761">
    <property type="entry name" value="Exonuc_VII_S"/>
</dbReference>
<dbReference type="InterPro" id="IPR037004">
    <property type="entry name" value="Exonuc_VII_ssu_sf"/>
</dbReference>
<dbReference type="NCBIfam" id="TIGR01280">
    <property type="entry name" value="xseB"/>
    <property type="match status" value="1"/>
</dbReference>
<dbReference type="PANTHER" id="PTHR34137">
    <property type="entry name" value="EXODEOXYRIBONUCLEASE 7 SMALL SUBUNIT"/>
    <property type="match status" value="1"/>
</dbReference>
<dbReference type="PANTHER" id="PTHR34137:SF1">
    <property type="entry name" value="EXODEOXYRIBONUCLEASE 7 SMALL SUBUNIT"/>
    <property type="match status" value="1"/>
</dbReference>
<dbReference type="Pfam" id="PF02609">
    <property type="entry name" value="Exonuc_VII_S"/>
    <property type="match status" value="1"/>
</dbReference>
<dbReference type="PIRSF" id="PIRSF006488">
    <property type="entry name" value="Exonuc_VII_S"/>
    <property type="match status" value="1"/>
</dbReference>
<dbReference type="SUPFAM" id="SSF116842">
    <property type="entry name" value="XseB-like"/>
    <property type="match status" value="1"/>
</dbReference>
<proteinExistence type="inferred from homology"/>
<organism>
    <name type="scientific">Synechococcus elongatus (strain ATCC 33912 / PCC 7942 / FACHB-805)</name>
    <name type="common">Anacystis nidulans R2</name>
    <dbReference type="NCBI Taxonomy" id="1140"/>
    <lineage>
        <taxon>Bacteria</taxon>
        <taxon>Bacillati</taxon>
        <taxon>Cyanobacteriota</taxon>
        <taxon>Cyanophyceae</taxon>
        <taxon>Synechococcales</taxon>
        <taxon>Synechococcaceae</taxon>
        <taxon>Synechococcus</taxon>
    </lineage>
</organism>